<sequence length="444" mass="49231">MDSGMRATCTVPEHFLPRKLSKQNLDRFIPNRSAKDFDFANYALTQGSKRNLDEVTSASRKAYMTQLAVVMNQNRTRILAFRNKPKSLLSTNHSDSPHQNPKPVKPRRYIPQNSERVLDAPGLRDDFSLNLLDWGSANVLAIALGDTVYLWDASSGSTSELVTIDEDKGPVTSINWTQDGLDLAVGLDNSEVQLWDCVSNRQVRTLRGGHESRVGSLAWDNHILTTGGMDGKIVNNDVRIRSSIVETYLGHTEEVCGLKWSESGNKQASGGNDNVVHIWDRSLASSKQTRQWLHRFEEHTAAVRALAWCPFQASLLATGGGVGDGKIKFWNTHTGACLNSVETGSQVCSLLWSQSERELLSSHGFTQNQLTLWKYPSMSKMAELNGHTSRVLFMAQSPNGCTVASAAGDENLRLWNVFGEPPKTTKKAASKKYPELFSHVNSLR</sequence>
<comment type="function">
    <text evidence="1">Component of the anaphase promoting complex/cyclosome (APC/C), a cell cycle-regulated E3 ubiquitin-protein ligase complex that controls progression through mitosis and the G1 phase of the cell cycle.</text>
</comment>
<comment type="pathway">
    <text>Protein modification; protein ubiquitination.</text>
</comment>
<comment type="subunit">
    <text evidence="1">The APC/C is composed of at least 11 subunits that stay tightly associated throughout the cell cycle.</text>
</comment>
<comment type="subcellular location">
    <subcellularLocation>
        <location evidence="3">Cytoplasm</location>
    </subcellularLocation>
</comment>
<comment type="similarity">
    <text evidence="4">Belongs to the WD repeat CDC20/Fizzy family.</text>
</comment>
<comment type="sequence caution" evidence="4">
    <conflict type="erroneous initiation">
        <sequence resource="EMBL-CDS" id="AAB61049"/>
    </conflict>
    <text>Truncated N-terminus.</text>
</comment>
<comment type="online information" name="Arabidopsis APC/C subunits">
    <link uri="http://personal.rhul.ac.uk/ujba/110/apc/APC.htm"/>
</comment>
<gene>
    <name type="primary">CDC20-4</name>
    <name type="synonym">CDC20_3</name>
    <name type="ordered locus">At5g26900</name>
    <name type="ORF">F2P16.8</name>
</gene>
<dbReference type="EMBL" id="AF007270">
    <property type="protein sequence ID" value="AAB61049.1"/>
    <property type="status" value="ALT_INIT"/>
    <property type="molecule type" value="Genomic_DNA"/>
</dbReference>
<dbReference type="EMBL" id="CP002688">
    <property type="protein sequence ID" value="AED93621.1"/>
    <property type="molecule type" value="Genomic_DNA"/>
</dbReference>
<dbReference type="EMBL" id="DQ056692">
    <property type="protein sequence ID" value="AAY78838.1"/>
    <property type="molecule type" value="mRNA"/>
</dbReference>
<dbReference type="PIR" id="T01768">
    <property type="entry name" value="T01768"/>
</dbReference>
<dbReference type="SMR" id="Q4PSE4"/>
<dbReference type="FunCoup" id="Q4PSE4">
    <property type="interactions" value="1659"/>
</dbReference>
<dbReference type="IntAct" id="Q4PSE4">
    <property type="interactions" value="1"/>
</dbReference>
<dbReference type="STRING" id="3702.Q4PSE4"/>
<dbReference type="PaxDb" id="3702-AT5G26900.1"/>
<dbReference type="ProteomicsDB" id="223948"/>
<dbReference type="EnsemblPlants" id="AT5G26900.1">
    <property type="protein sequence ID" value="AT5G26900.1"/>
    <property type="gene ID" value="AT5G26900"/>
</dbReference>
<dbReference type="GeneID" id="832748"/>
<dbReference type="Gramene" id="AT5G26900.1">
    <property type="protein sequence ID" value="AT5G26900.1"/>
    <property type="gene ID" value="AT5G26900"/>
</dbReference>
<dbReference type="KEGG" id="ath:AT5G26900"/>
<dbReference type="Araport" id="AT5G26900"/>
<dbReference type="TAIR" id="AT5G26900">
    <property type="gene designation" value="CDC20.4"/>
</dbReference>
<dbReference type="eggNOG" id="KOG0305">
    <property type="taxonomic scope" value="Eukaryota"/>
</dbReference>
<dbReference type="HOGENOM" id="CLU_014831_6_1_1"/>
<dbReference type="InParanoid" id="Q4PSE4"/>
<dbReference type="OMA" id="LAWNKRI"/>
<dbReference type="PhylomeDB" id="Q4PSE4"/>
<dbReference type="UniPathway" id="UPA00143"/>
<dbReference type="PRO" id="PR:Q4PSE4"/>
<dbReference type="Proteomes" id="UP000006548">
    <property type="component" value="Chromosome 5"/>
</dbReference>
<dbReference type="ExpressionAtlas" id="Q4PSE4">
    <property type="expression patterns" value="baseline and differential"/>
</dbReference>
<dbReference type="GO" id="GO:0005737">
    <property type="term" value="C:cytoplasm"/>
    <property type="evidence" value="ECO:0007669"/>
    <property type="project" value="UniProtKB-SubCell"/>
</dbReference>
<dbReference type="GO" id="GO:0010997">
    <property type="term" value="F:anaphase-promoting complex binding"/>
    <property type="evidence" value="ECO:0007669"/>
    <property type="project" value="InterPro"/>
</dbReference>
<dbReference type="GO" id="GO:0097027">
    <property type="term" value="F:ubiquitin-protein transferase activator activity"/>
    <property type="evidence" value="ECO:0007669"/>
    <property type="project" value="InterPro"/>
</dbReference>
<dbReference type="GO" id="GO:0051301">
    <property type="term" value="P:cell division"/>
    <property type="evidence" value="ECO:0007669"/>
    <property type="project" value="UniProtKB-KW"/>
</dbReference>
<dbReference type="GO" id="GO:0016567">
    <property type="term" value="P:protein ubiquitination"/>
    <property type="evidence" value="ECO:0007669"/>
    <property type="project" value="UniProtKB-UniPathway"/>
</dbReference>
<dbReference type="Gene3D" id="2.130.10.10">
    <property type="entry name" value="YVTN repeat-like/Quinoprotein amine dehydrogenase"/>
    <property type="match status" value="1"/>
</dbReference>
<dbReference type="InterPro" id="IPR033010">
    <property type="entry name" value="Cdc20/Fizzy"/>
</dbReference>
<dbReference type="InterPro" id="IPR015943">
    <property type="entry name" value="WD40/YVTN_repeat-like_dom_sf"/>
</dbReference>
<dbReference type="InterPro" id="IPR056150">
    <property type="entry name" value="WD40_CDC20-Fz"/>
</dbReference>
<dbReference type="InterPro" id="IPR019775">
    <property type="entry name" value="WD40_repeat_CS"/>
</dbReference>
<dbReference type="InterPro" id="IPR036322">
    <property type="entry name" value="WD40_repeat_dom_sf"/>
</dbReference>
<dbReference type="InterPro" id="IPR001680">
    <property type="entry name" value="WD40_rpt"/>
</dbReference>
<dbReference type="PANTHER" id="PTHR19918">
    <property type="entry name" value="CELL DIVISION CYCLE 20 CDC20 FIZZY -RELATED"/>
    <property type="match status" value="1"/>
</dbReference>
<dbReference type="PANTHER" id="PTHR19918:SF8">
    <property type="entry name" value="FI02843P"/>
    <property type="match status" value="1"/>
</dbReference>
<dbReference type="Pfam" id="PF24807">
    <property type="entry name" value="WD40_CDC20-Fz"/>
    <property type="match status" value="1"/>
</dbReference>
<dbReference type="SMART" id="SM00320">
    <property type="entry name" value="WD40"/>
    <property type="match status" value="6"/>
</dbReference>
<dbReference type="SUPFAM" id="SSF50978">
    <property type="entry name" value="WD40 repeat-like"/>
    <property type="match status" value="1"/>
</dbReference>
<dbReference type="PROSITE" id="PS00678">
    <property type="entry name" value="WD_REPEATS_1"/>
    <property type="match status" value="2"/>
</dbReference>
<dbReference type="PROSITE" id="PS50082">
    <property type="entry name" value="WD_REPEATS_2"/>
    <property type="match status" value="3"/>
</dbReference>
<dbReference type="PROSITE" id="PS50294">
    <property type="entry name" value="WD_REPEATS_REGION"/>
    <property type="match status" value="1"/>
</dbReference>
<accession>Q4PSE4</accession>
<accession>O04634</accession>
<protein>
    <recommendedName>
        <fullName>Cell division cycle 20.4, cofactor of APC complex</fullName>
        <shortName>AtCDC20.4</shortName>
    </recommendedName>
</protein>
<reference key="1">
    <citation type="journal article" date="2000" name="Nature">
        <title>Sequence and analysis of chromosome 5 of the plant Arabidopsis thaliana.</title>
        <authorList>
            <person name="Tabata S."/>
            <person name="Kaneko T."/>
            <person name="Nakamura Y."/>
            <person name="Kotani H."/>
            <person name="Kato T."/>
            <person name="Asamizu E."/>
            <person name="Miyajima N."/>
            <person name="Sasamoto S."/>
            <person name="Kimura T."/>
            <person name="Hosouchi T."/>
            <person name="Kawashima K."/>
            <person name="Kohara M."/>
            <person name="Matsumoto M."/>
            <person name="Matsuno A."/>
            <person name="Muraki A."/>
            <person name="Nakayama S."/>
            <person name="Nakazaki N."/>
            <person name="Naruo K."/>
            <person name="Okumura S."/>
            <person name="Shinpo S."/>
            <person name="Takeuchi C."/>
            <person name="Wada T."/>
            <person name="Watanabe A."/>
            <person name="Yamada M."/>
            <person name="Yasuda M."/>
            <person name="Sato S."/>
            <person name="de la Bastide M."/>
            <person name="Huang E."/>
            <person name="Spiegel L."/>
            <person name="Gnoj L."/>
            <person name="O'Shaughnessy A."/>
            <person name="Preston R."/>
            <person name="Habermann K."/>
            <person name="Murray J."/>
            <person name="Johnson D."/>
            <person name="Rohlfing T."/>
            <person name="Nelson J."/>
            <person name="Stoneking T."/>
            <person name="Pepin K."/>
            <person name="Spieth J."/>
            <person name="Sekhon M."/>
            <person name="Armstrong J."/>
            <person name="Becker M."/>
            <person name="Belter E."/>
            <person name="Cordum H."/>
            <person name="Cordes M."/>
            <person name="Courtney L."/>
            <person name="Courtney W."/>
            <person name="Dante M."/>
            <person name="Du H."/>
            <person name="Edwards J."/>
            <person name="Fryman J."/>
            <person name="Haakensen B."/>
            <person name="Lamar E."/>
            <person name="Latreille P."/>
            <person name="Leonard S."/>
            <person name="Meyer R."/>
            <person name="Mulvaney E."/>
            <person name="Ozersky P."/>
            <person name="Riley A."/>
            <person name="Strowmatt C."/>
            <person name="Wagner-McPherson C."/>
            <person name="Wollam A."/>
            <person name="Yoakum M."/>
            <person name="Bell M."/>
            <person name="Dedhia N."/>
            <person name="Parnell L."/>
            <person name="Shah R."/>
            <person name="Rodriguez M."/>
            <person name="Hoon See L."/>
            <person name="Vil D."/>
            <person name="Baker J."/>
            <person name="Kirchoff K."/>
            <person name="Toth K."/>
            <person name="King L."/>
            <person name="Bahret A."/>
            <person name="Miller B."/>
            <person name="Marra M.A."/>
            <person name="Martienssen R."/>
            <person name="McCombie W.R."/>
            <person name="Wilson R.K."/>
            <person name="Murphy G."/>
            <person name="Bancroft I."/>
            <person name="Volckaert G."/>
            <person name="Wambutt R."/>
            <person name="Duesterhoeft A."/>
            <person name="Stiekema W."/>
            <person name="Pohl T."/>
            <person name="Entian K.-D."/>
            <person name="Terryn N."/>
            <person name="Hartley N."/>
            <person name="Bent E."/>
            <person name="Johnson S."/>
            <person name="Langham S.-A."/>
            <person name="McCullagh B."/>
            <person name="Robben J."/>
            <person name="Grymonprez B."/>
            <person name="Zimmermann W."/>
            <person name="Ramsperger U."/>
            <person name="Wedler H."/>
            <person name="Balke K."/>
            <person name="Wedler E."/>
            <person name="Peters S."/>
            <person name="van Staveren M."/>
            <person name="Dirkse W."/>
            <person name="Mooijman P."/>
            <person name="Klein Lankhorst R."/>
            <person name="Weitzenegger T."/>
            <person name="Bothe G."/>
            <person name="Rose M."/>
            <person name="Hauf J."/>
            <person name="Berneiser S."/>
            <person name="Hempel S."/>
            <person name="Feldpausch M."/>
            <person name="Lamberth S."/>
            <person name="Villarroel R."/>
            <person name="Gielen J."/>
            <person name="Ardiles W."/>
            <person name="Bents O."/>
            <person name="Lemcke K."/>
            <person name="Kolesov G."/>
            <person name="Mayer K.F.X."/>
            <person name="Rudd S."/>
            <person name="Schoof H."/>
            <person name="Schueller C."/>
            <person name="Zaccaria P."/>
            <person name="Mewes H.-W."/>
            <person name="Bevan M."/>
            <person name="Fransz P.F."/>
        </authorList>
    </citation>
    <scope>NUCLEOTIDE SEQUENCE [LARGE SCALE GENOMIC DNA]</scope>
    <source>
        <strain>cv. Columbia</strain>
    </source>
</reference>
<reference key="2">
    <citation type="journal article" date="2017" name="Plant J.">
        <title>Araport11: a complete reannotation of the Arabidopsis thaliana reference genome.</title>
        <authorList>
            <person name="Cheng C.Y."/>
            <person name="Krishnakumar V."/>
            <person name="Chan A.P."/>
            <person name="Thibaud-Nissen F."/>
            <person name="Schobel S."/>
            <person name="Town C.D."/>
        </authorList>
    </citation>
    <scope>GENOME REANNOTATION</scope>
    <source>
        <strain>cv. Columbia</strain>
    </source>
</reference>
<reference key="3">
    <citation type="submission" date="2005-05" db="EMBL/GenBank/DDBJ databases">
        <authorList>
            <person name="Underwood B.A."/>
            <person name="Xiao Y.-L."/>
            <person name="Moskal W.A. Jr."/>
            <person name="Monaghan E.L."/>
            <person name="Wang W."/>
            <person name="Redman J.C."/>
            <person name="Wu H.C."/>
            <person name="Utterback T."/>
            <person name="Town C.D."/>
        </authorList>
    </citation>
    <scope>NUCLEOTIDE SEQUENCE [LARGE SCALE MRNA]</scope>
    <source>
        <strain>cv. Columbia</strain>
    </source>
</reference>
<reference key="4">
    <citation type="journal article" date="2003" name="Trends Plant Sci.">
        <title>First glance at the plant APC/C, a highly conserved ubiquitin-protein ligase.</title>
        <authorList>
            <person name="Capron A."/>
            <person name="Okresz L."/>
            <person name="Genschik P."/>
        </authorList>
    </citation>
    <scope>REVIEW</scope>
</reference>
<reference key="5">
    <citation type="journal article" date="2010" name="BMC Plant Biol.">
        <title>Genomic evolution and complexity of the Anaphase-promoting Complex (APC) in land plants.</title>
        <authorList>
            <person name="Lima M.D.F."/>
            <person name="Eloy N.B."/>
            <person name="Pegoraro C."/>
            <person name="Sagit R."/>
            <person name="Rojas C."/>
            <person name="Bretz T."/>
            <person name="Vargas L."/>
            <person name="Elofsson A."/>
            <person name="de Oliveira A.C."/>
            <person name="Hemerly A.S."/>
            <person name="Ferreira P.C.G."/>
        </authorList>
    </citation>
    <scope>REVIEW</scope>
    <scope>GENE FAMILY</scope>
</reference>
<reference key="6">
    <citation type="journal article" date="2011" name="PLoS ONE">
        <title>Conserved CDC20 cell cycle functions are carried out by two of the five isoforms in Arabidopsis thaliana.</title>
        <authorList>
            <person name="Kevei Z."/>
            <person name="Baloban M."/>
            <person name="Da Ines O."/>
            <person name="Tiricz H."/>
            <person name="Kroll A."/>
            <person name="Regulski K."/>
            <person name="Mergaert P."/>
            <person name="Kondorosi E."/>
        </authorList>
    </citation>
    <scope>SUBCELLULAR LOCATION</scope>
</reference>
<name>CDC24_ARATH</name>
<keyword id="KW-0131">Cell cycle</keyword>
<keyword id="KW-0132">Cell division</keyword>
<keyword id="KW-0963">Cytoplasm</keyword>
<keyword id="KW-0498">Mitosis</keyword>
<keyword id="KW-1185">Reference proteome</keyword>
<keyword id="KW-0677">Repeat</keyword>
<keyword id="KW-0833">Ubl conjugation pathway</keyword>
<keyword id="KW-0853">WD repeat</keyword>
<evidence type="ECO:0000250" key="1"/>
<evidence type="ECO:0000256" key="2">
    <source>
        <dbReference type="SAM" id="MobiDB-lite"/>
    </source>
</evidence>
<evidence type="ECO:0000269" key="3">
    <source>
    </source>
</evidence>
<evidence type="ECO:0000305" key="4"/>
<feature type="chain" id="PRO_0000423309" description="Cell division cycle 20.4, cofactor of APC complex">
    <location>
        <begin position="1"/>
        <end position="444"/>
    </location>
</feature>
<feature type="repeat" description="WD 1">
    <location>
        <begin position="124"/>
        <end position="161"/>
    </location>
</feature>
<feature type="repeat" description="WD 2">
    <location>
        <begin position="166"/>
        <end position="205"/>
    </location>
</feature>
<feature type="repeat" description="WD 3">
    <location>
        <begin position="209"/>
        <end position="246"/>
    </location>
</feature>
<feature type="repeat" description="WD 4">
    <location>
        <begin position="250"/>
        <end position="289"/>
    </location>
</feature>
<feature type="repeat" description="WD 5">
    <location>
        <begin position="298"/>
        <end position="340"/>
    </location>
</feature>
<feature type="repeat" description="WD 6">
    <location>
        <begin position="342"/>
        <end position="383"/>
    </location>
</feature>
<feature type="repeat" description="WD 7">
    <location>
        <begin position="386"/>
        <end position="425"/>
    </location>
</feature>
<feature type="region of interest" description="Disordered" evidence="2">
    <location>
        <begin position="88"/>
        <end position="108"/>
    </location>
</feature>
<feature type="compositionally biased region" description="Polar residues" evidence="2">
    <location>
        <begin position="88"/>
        <end position="99"/>
    </location>
</feature>
<organism>
    <name type="scientific">Arabidopsis thaliana</name>
    <name type="common">Mouse-ear cress</name>
    <dbReference type="NCBI Taxonomy" id="3702"/>
    <lineage>
        <taxon>Eukaryota</taxon>
        <taxon>Viridiplantae</taxon>
        <taxon>Streptophyta</taxon>
        <taxon>Embryophyta</taxon>
        <taxon>Tracheophyta</taxon>
        <taxon>Spermatophyta</taxon>
        <taxon>Magnoliopsida</taxon>
        <taxon>eudicotyledons</taxon>
        <taxon>Gunneridae</taxon>
        <taxon>Pentapetalae</taxon>
        <taxon>rosids</taxon>
        <taxon>malvids</taxon>
        <taxon>Brassicales</taxon>
        <taxon>Brassicaceae</taxon>
        <taxon>Camelineae</taxon>
        <taxon>Arabidopsis</taxon>
    </lineage>
</organism>
<proteinExistence type="evidence at transcript level"/>